<name>HV343_HUMAN</name>
<comment type="function">
    <text evidence="5 6 7 8">V region of the variable domain of immunoglobulin heavy chains that participates in the antigen recognition (PubMed:24600447). Immunoglobulins, also known as antibodies, are membrane-bound or secreted glycoproteins produced by B lymphocytes. In the recognition phase of humoral immunity, the membrane-bound immunoglobulins serve as receptors which, upon binding of a specific antigen, trigger the clonal expansion and differentiation of B lymphocytes into immunoglobulins-secreting plasma cells. Secreted immunoglobulins mediate the effector phase of humoral immunity, which results in the elimination of bound antigens (PubMed:20176268, PubMed:22158414). The antigen binding site is formed by the variable domain of one heavy chain, together with that of its associated light chain. Thus, each immunoglobulin has two antigen binding sites with remarkable affinity for a particular antigen. The variable domains are assembled by a process called V-(D)-J rearrangement and can then be subjected to somatic hypermutations which, after exposure to antigen and selection, allow affinity maturation for a particular antigen (PubMed:17576170, PubMed:20176268).</text>
</comment>
<comment type="subunit">
    <text evidence="6">Immunoglobulins are composed of two identical heavy chains and two identical light chains; disulfide-linked.</text>
</comment>
<comment type="subcellular location">
    <subcellularLocation>
        <location evidence="6 7">Secreted</location>
    </subcellularLocation>
    <subcellularLocation>
        <location evidence="6 7">Cell membrane</location>
    </subcellularLocation>
</comment>
<comment type="polymorphism">
    <text evidence="10">There are several alleles. The sequence shown is that of IMGT allele IGHV3-43*01.</text>
</comment>
<comment type="caution">
    <text evidence="10">For examples of full-length immunoglobulin heavy chains (of different isotypes) see AC P0DOX2, AC P0DOX3, AC P0DOX4, AC P0DOX5 and AC P0DOX6.</text>
</comment>
<dbReference type="EMBL" id="AC244452">
    <property type="status" value="NOT_ANNOTATED_CDS"/>
    <property type="molecule type" value="Genomic_DNA"/>
</dbReference>
<dbReference type="EMDB" id="EMD-27113"/>
<dbReference type="SMR" id="A0A0B4J1X8"/>
<dbReference type="FunCoup" id="A0A0B4J1X8">
    <property type="interactions" value="332"/>
</dbReference>
<dbReference type="IMGT_GENE-DB" id="IGHV3-43"/>
<dbReference type="BioMuta" id="IGHV3-43"/>
<dbReference type="jPOST" id="A0A0B4J1X8"/>
<dbReference type="MassIVE" id="A0A0B4J1X8"/>
<dbReference type="PRIDE" id="A0A0B4J1X8"/>
<dbReference type="Ensembl" id="ENST00000434710.1">
    <property type="protein sequence ID" value="ENSP00000399826.1"/>
    <property type="gene ID" value="ENSG00000232216.1"/>
</dbReference>
<dbReference type="Ensembl" id="ENST00000633040.1">
    <property type="protein sequence ID" value="ENSP00000487611.1"/>
    <property type="gene ID" value="ENSG00000282151.1"/>
</dbReference>
<dbReference type="AGR" id="HGNC:5604"/>
<dbReference type="GeneCards" id="IGHV3-43"/>
<dbReference type="HGNC" id="HGNC:5604">
    <property type="gene designation" value="IGHV3-43"/>
</dbReference>
<dbReference type="HPA" id="ENSG00000232216">
    <property type="expression patterns" value="Tissue enhanced (lymphoid tissue, stomach, urinary bladder)"/>
</dbReference>
<dbReference type="neXtProt" id="NX_A0A0B4J1X8"/>
<dbReference type="OpenTargets" id="ENSG00000232216"/>
<dbReference type="VEuPathDB" id="HostDB:ENSG00000232216"/>
<dbReference type="GeneTree" id="ENSGT01050000244871"/>
<dbReference type="HOGENOM" id="CLU_077975_5_2_1"/>
<dbReference type="InParanoid" id="A0A0B4J1X8"/>
<dbReference type="OMA" id="SSTYCAD"/>
<dbReference type="PAN-GO" id="A0A0B4J1X8">
    <property type="GO annotations" value="11 GO annotations based on evolutionary models"/>
</dbReference>
<dbReference type="PhylomeDB" id="A0A0B4J1X8"/>
<dbReference type="ChiTaRS" id="IGHV3-43">
    <property type="organism name" value="human"/>
</dbReference>
<dbReference type="Pharos" id="A0A0B4J1X8">
    <property type="development level" value="Tdark"/>
</dbReference>
<dbReference type="PRO" id="PR:A0A0B4J1X8"/>
<dbReference type="Proteomes" id="UP000005640">
    <property type="component" value="Chromosome 14"/>
</dbReference>
<dbReference type="RNAct" id="A0A0B4J1X8">
    <property type="molecule type" value="protein"/>
</dbReference>
<dbReference type="Bgee" id="ENSG00000232216">
    <property type="expression patterns" value="Expressed in duodenum and 83 other cell types or tissues"/>
</dbReference>
<dbReference type="GO" id="GO:0005576">
    <property type="term" value="C:extracellular region"/>
    <property type="evidence" value="ECO:0007669"/>
    <property type="project" value="UniProtKB-SubCell"/>
</dbReference>
<dbReference type="GO" id="GO:0019814">
    <property type="term" value="C:immunoglobulin complex"/>
    <property type="evidence" value="ECO:0007669"/>
    <property type="project" value="UniProtKB-KW"/>
</dbReference>
<dbReference type="GO" id="GO:0005886">
    <property type="term" value="C:plasma membrane"/>
    <property type="evidence" value="ECO:0007669"/>
    <property type="project" value="UniProtKB-SubCell"/>
</dbReference>
<dbReference type="GO" id="GO:0003823">
    <property type="term" value="F:antigen binding"/>
    <property type="evidence" value="ECO:0000318"/>
    <property type="project" value="GO_Central"/>
</dbReference>
<dbReference type="GO" id="GO:0016064">
    <property type="term" value="P:immunoglobulin mediated immune response"/>
    <property type="evidence" value="ECO:0000318"/>
    <property type="project" value="GO_Central"/>
</dbReference>
<dbReference type="CDD" id="cd04981">
    <property type="entry name" value="IgV_H"/>
    <property type="match status" value="1"/>
</dbReference>
<dbReference type="FunFam" id="2.60.40.10:FF:000942">
    <property type="entry name" value="Immunoglobulin heavy variable 3-23"/>
    <property type="match status" value="1"/>
</dbReference>
<dbReference type="Gene3D" id="2.60.40.10">
    <property type="entry name" value="Immunoglobulins"/>
    <property type="match status" value="1"/>
</dbReference>
<dbReference type="InterPro" id="IPR007110">
    <property type="entry name" value="Ig-like_dom"/>
</dbReference>
<dbReference type="InterPro" id="IPR036179">
    <property type="entry name" value="Ig-like_dom_sf"/>
</dbReference>
<dbReference type="InterPro" id="IPR013783">
    <property type="entry name" value="Ig-like_fold"/>
</dbReference>
<dbReference type="InterPro" id="IPR013106">
    <property type="entry name" value="Ig_V-set"/>
</dbReference>
<dbReference type="InterPro" id="IPR050199">
    <property type="entry name" value="IgHV"/>
</dbReference>
<dbReference type="PANTHER" id="PTHR23266">
    <property type="entry name" value="IMMUNOGLOBULIN HEAVY CHAIN"/>
    <property type="match status" value="1"/>
</dbReference>
<dbReference type="Pfam" id="PF07686">
    <property type="entry name" value="V-set"/>
    <property type="match status" value="1"/>
</dbReference>
<dbReference type="SMART" id="SM00406">
    <property type="entry name" value="IGv"/>
    <property type="match status" value="1"/>
</dbReference>
<dbReference type="SUPFAM" id="SSF48726">
    <property type="entry name" value="Immunoglobulin"/>
    <property type="match status" value="1"/>
</dbReference>
<dbReference type="PROSITE" id="PS50835">
    <property type="entry name" value="IG_LIKE"/>
    <property type="match status" value="1"/>
</dbReference>
<sequence>MEFGLSWVFLVAILKGVQCEVQLVESGGVVVQPGGSLRLSCAASGFTFDDYTMHWVRQAPGKGLEWVSLISWDGGSTYYADSVKGRFTISRDNSKNSLYLQMNSLRTEDTALYYCAKD</sequence>
<keyword id="KW-1064">Adaptive immunity</keyword>
<keyword id="KW-1003">Cell membrane</keyword>
<keyword id="KW-1015">Disulfide bond</keyword>
<keyword id="KW-0391">Immunity</keyword>
<keyword id="KW-1280">Immunoglobulin</keyword>
<keyword id="KW-0393">Immunoglobulin domain</keyword>
<keyword id="KW-0472">Membrane</keyword>
<keyword id="KW-1267">Proteomics identification</keyword>
<keyword id="KW-1185">Reference proteome</keyword>
<keyword id="KW-0964">Secreted</keyword>
<keyword id="KW-0732">Signal</keyword>
<protein>
    <recommendedName>
        <fullName evidence="4 9">Immunoglobulin heavy variable 3-43</fullName>
    </recommendedName>
</protein>
<accession>A0A0B4J1X8</accession>
<proteinExistence type="evidence at protein level"/>
<gene>
    <name evidence="4 9" type="primary">IGHV3-43</name>
</gene>
<evidence type="ECO:0000250" key="1">
    <source>
        <dbReference type="UniProtKB" id="P23083"/>
    </source>
</evidence>
<evidence type="ECO:0000255" key="2"/>
<evidence type="ECO:0000255" key="3">
    <source>
        <dbReference type="PROSITE-ProRule" id="PRU00114"/>
    </source>
</evidence>
<evidence type="ECO:0000303" key="4">
    <source>
    </source>
</evidence>
<evidence type="ECO:0000303" key="5">
    <source>
    </source>
</evidence>
<evidence type="ECO:0000303" key="6">
    <source>
    </source>
</evidence>
<evidence type="ECO:0000303" key="7">
    <source>
    </source>
</evidence>
<evidence type="ECO:0000303" key="8">
    <source>
    </source>
</evidence>
<evidence type="ECO:0000303" key="9">
    <source ref="3"/>
</evidence>
<evidence type="ECO:0000305" key="10"/>
<feature type="signal peptide" evidence="2">
    <location>
        <begin position="1"/>
        <end position="19"/>
    </location>
</feature>
<feature type="chain" id="PRO_5007762600" description="Immunoglobulin heavy variable 3-43" evidence="2">
    <location>
        <begin position="20"/>
        <end position="118"/>
    </location>
</feature>
<feature type="domain" description="Ig-like" evidence="3">
    <location>
        <begin position="20"/>
        <end position="118" status="greater than"/>
    </location>
</feature>
<feature type="region of interest" description="Framework-1" evidence="1">
    <location>
        <begin position="20"/>
        <end position="44"/>
    </location>
</feature>
<feature type="region of interest" description="Complementarity-determining-1" evidence="1">
    <location>
        <begin position="45"/>
        <end position="52"/>
    </location>
</feature>
<feature type="region of interest" description="Framework-2" evidence="1">
    <location>
        <begin position="53"/>
        <end position="69"/>
    </location>
</feature>
<feature type="region of interest" description="Complementarity-determining-2" evidence="1">
    <location>
        <begin position="70"/>
        <end position="77"/>
    </location>
</feature>
<feature type="region of interest" description="Framework-3" evidence="1">
    <location>
        <begin position="78"/>
        <end position="115"/>
    </location>
</feature>
<feature type="region of interest" description="Complementarity-determining-3" evidence="1">
    <location>
        <begin position="116"/>
        <end position="118" status="greater than"/>
    </location>
</feature>
<feature type="disulfide bond" evidence="3">
    <location>
        <begin position="41"/>
        <end position="115"/>
    </location>
</feature>
<feature type="non-terminal residue">
    <location>
        <position position="118"/>
    </location>
</feature>
<reference key="1">
    <citation type="journal article" date="2003" name="Nature">
        <title>The DNA sequence and analysis of human chromosome 14.</title>
        <authorList>
            <person name="Heilig R."/>
            <person name="Eckenberg R."/>
            <person name="Petit J.-L."/>
            <person name="Fonknechten N."/>
            <person name="Da Silva C."/>
            <person name="Cattolico L."/>
            <person name="Levy M."/>
            <person name="Barbe V."/>
            <person name="De Berardinis V."/>
            <person name="Ureta-Vidal A."/>
            <person name="Pelletier E."/>
            <person name="Vico V."/>
            <person name="Anthouard V."/>
            <person name="Rowen L."/>
            <person name="Madan A."/>
            <person name="Qin S."/>
            <person name="Sun H."/>
            <person name="Du H."/>
            <person name="Pepin K."/>
            <person name="Artiguenave F."/>
            <person name="Robert C."/>
            <person name="Cruaud C."/>
            <person name="Bruels T."/>
            <person name="Jaillon O."/>
            <person name="Friedlander L."/>
            <person name="Samson G."/>
            <person name="Brottier P."/>
            <person name="Cure S."/>
            <person name="Segurens B."/>
            <person name="Aniere F."/>
            <person name="Samain S."/>
            <person name="Crespeau H."/>
            <person name="Abbasi N."/>
            <person name="Aiach N."/>
            <person name="Boscus D."/>
            <person name="Dickhoff R."/>
            <person name="Dors M."/>
            <person name="Dubois I."/>
            <person name="Friedman C."/>
            <person name="Gouyvenoux M."/>
            <person name="James R."/>
            <person name="Madan A."/>
            <person name="Mairey-Estrada B."/>
            <person name="Mangenot S."/>
            <person name="Martins N."/>
            <person name="Menard M."/>
            <person name="Oztas S."/>
            <person name="Ratcliffe A."/>
            <person name="Shaffer T."/>
            <person name="Trask B."/>
            <person name="Vacherie B."/>
            <person name="Bellemere C."/>
            <person name="Belser C."/>
            <person name="Besnard-Gonnet M."/>
            <person name="Bartol-Mavel D."/>
            <person name="Boutard M."/>
            <person name="Briez-Silla S."/>
            <person name="Combette S."/>
            <person name="Dufosse-Laurent V."/>
            <person name="Ferron C."/>
            <person name="Lechaplais C."/>
            <person name="Louesse C."/>
            <person name="Muselet D."/>
            <person name="Magdelenat G."/>
            <person name="Pateau E."/>
            <person name="Petit E."/>
            <person name="Sirvain-Trukniewicz P."/>
            <person name="Trybou A."/>
            <person name="Vega-Czarny N."/>
            <person name="Bataille E."/>
            <person name="Bluet E."/>
            <person name="Bordelais I."/>
            <person name="Dubois M."/>
            <person name="Dumont C."/>
            <person name="Guerin T."/>
            <person name="Haffray S."/>
            <person name="Hammadi R."/>
            <person name="Muanga J."/>
            <person name="Pellouin V."/>
            <person name="Robert D."/>
            <person name="Wunderle E."/>
            <person name="Gauguet G."/>
            <person name="Roy A."/>
            <person name="Sainte-Marthe L."/>
            <person name="Verdier J."/>
            <person name="Verdier-Discala C."/>
            <person name="Hillier L.W."/>
            <person name="Fulton L."/>
            <person name="McPherson J."/>
            <person name="Matsuda F."/>
            <person name="Wilson R."/>
            <person name="Scarpelli C."/>
            <person name="Gyapay G."/>
            <person name="Wincker P."/>
            <person name="Saurin W."/>
            <person name="Quetier F."/>
            <person name="Waterston R."/>
            <person name="Hood L."/>
            <person name="Weissenbach J."/>
        </authorList>
    </citation>
    <scope>NUCLEOTIDE SEQUENCE [LARGE SCALE GENOMIC DNA] (IMGT ALLELE IGHV3-43*01)</scope>
</reference>
<reference key="2">
    <citation type="journal article" date="2001" name="Exp. Clin. Immunogenet.">
        <title>Nomenclature of the human immunoglobulin heavy (IGH) genes.</title>
        <authorList>
            <person name="Lefranc M.P."/>
        </authorList>
    </citation>
    <scope>NOMENCLATURE</scope>
</reference>
<reference key="3">
    <citation type="book" date="2001" name="The Immunoglobulin FactsBook.">
        <title>The Immunoglobulin FactsBook.</title>
        <editorList>
            <person name="Lefranc M.P."/>
            <person name="Lefranc G."/>
        </editorList>
        <authorList>
            <person name="Lefranc M.P."/>
            <person name="Lefranc G."/>
        </authorList>
    </citation>
    <scope>NOMENCLATURE</scope>
</reference>
<reference key="4">
    <citation type="journal article" date="2007" name="Annu. Rev. Genet.">
        <title>Immunoglobulin somatic hypermutation.</title>
        <authorList>
            <person name="Teng G."/>
            <person name="Papavasiliou F.N."/>
        </authorList>
    </citation>
    <scope>REVIEW ON SOMATIC HYPERMUTATION</scope>
</reference>
<reference key="5">
    <citation type="journal article" date="2010" name="J. Allergy Clin. Immunol.">
        <title>Structure and function of immunoglobulins.</title>
        <authorList>
            <person name="Schroeder H.W. Jr."/>
            <person name="Cavacini L."/>
        </authorList>
    </citation>
    <scope>REVIEW ON IMMUNOGLOBULINS</scope>
</reference>
<reference key="6">
    <citation type="journal article" date="2012" name="Nat. Rev. Immunol.">
        <title>Molecular programming of B cell memory.</title>
        <authorList>
            <person name="McHeyzer-Williams M."/>
            <person name="Okitsu S."/>
            <person name="Wang N."/>
            <person name="McHeyzer-Williams L."/>
        </authorList>
    </citation>
    <scope>REVIEW ON FUNCTION</scope>
</reference>
<reference key="7">
    <citation type="journal article" date="2014" name="Front. Immunol.">
        <title>Immunoglobulin and T Cell Receptor Genes: IMGT((R)) and the Birth and Rise of Immunoinformatics.</title>
        <authorList>
            <person name="Lefranc M.P."/>
        </authorList>
    </citation>
    <scope>NOMENCLATURE</scope>
</reference>
<organism>
    <name type="scientific">Homo sapiens</name>
    <name type="common">Human</name>
    <dbReference type="NCBI Taxonomy" id="9606"/>
    <lineage>
        <taxon>Eukaryota</taxon>
        <taxon>Metazoa</taxon>
        <taxon>Chordata</taxon>
        <taxon>Craniata</taxon>
        <taxon>Vertebrata</taxon>
        <taxon>Euteleostomi</taxon>
        <taxon>Mammalia</taxon>
        <taxon>Eutheria</taxon>
        <taxon>Euarchontoglires</taxon>
        <taxon>Primates</taxon>
        <taxon>Haplorrhini</taxon>
        <taxon>Catarrhini</taxon>
        <taxon>Hominidae</taxon>
        <taxon>Homo</taxon>
    </lineage>
</organism>